<name>Y840_BRUA4</name>
<keyword id="KW-1003">Cell membrane</keyword>
<keyword id="KW-0472">Membrane</keyword>
<keyword id="KW-1185">Reference proteome</keyword>
<keyword id="KW-0812">Transmembrane</keyword>
<keyword id="KW-1133">Transmembrane helix</keyword>
<sequence>MSSLAQASKPSAQRWGLGALIVLAILAVQASWLYFDGRIAMCECGTIKLWSGSLMTENSQHISDWYTLSHIIHGFLFYWLFTVIAPKAPLGLRLAAAVGIEAVWELVENSNFIIERYRANTSSVDYFGDSIVNSVADTVAALIGFLIAAKLPTKITVAIALFFEVLALIVIRDNLTLNVIMLLHPFEFIKQWQSGL</sequence>
<comment type="subcellular location">
    <subcellularLocation>
        <location evidence="1">Cell membrane</location>
        <topology evidence="1">Multi-pass membrane protein</topology>
    </subcellularLocation>
</comment>
<comment type="similarity">
    <text evidence="1">Belongs to the UPF0314 family.</text>
</comment>
<organism>
    <name type="scientific">Brucella anthropi (strain ATCC 49188 / DSM 6882 / CCUG 24695 / JCM 21032 / LMG 3331 / NBRC 15819 / NCTC 12168 / Alc 37)</name>
    <name type="common">Ochrobactrum anthropi</name>
    <dbReference type="NCBI Taxonomy" id="439375"/>
    <lineage>
        <taxon>Bacteria</taxon>
        <taxon>Pseudomonadati</taxon>
        <taxon>Pseudomonadota</taxon>
        <taxon>Alphaproteobacteria</taxon>
        <taxon>Hyphomicrobiales</taxon>
        <taxon>Brucellaceae</taxon>
        <taxon>Brucella/Ochrobactrum group</taxon>
        <taxon>Brucella</taxon>
    </lineage>
</organism>
<accession>A6WX58</accession>
<evidence type="ECO:0000255" key="1">
    <source>
        <dbReference type="HAMAP-Rule" id="MF_01514"/>
    </source>
</evidence>
<feature type="chain" id="PRO_0000315254" description="UPF0314 protein Oant_0840">
    <location>
        <begin position="1"/>
        <end position="196"/>
    </location>
</feature>
<feature type="transmembrane region" description="Helical" evidence="1">
    <location>
        <begin position="15"/>
        <end position="35"/>
    </location>
</feature>
<feature type="transmembrane region" description="Helical" evidence="1">
    <location>
        <begin position="65"/>
        <end position="85"/>
    </location>
</feature>
<feature type="transmembrane region" description="Helical" evidence="1">
    <location>
        <begin position="127"/>
        <end position="147"/>
    </location>
</feature>
<feature type="transmembrane region" description="Helical" evidence="1">
    <location>
        <begin position="151"/>
        <end position="171"/>
    </location>
</feature>
<gene>
    <name type="ordered locus">Oant_0840</name>
</gene>
<reference key="1">
    <citation type="journal article" date="2011" name="J. Bacteriol.">
        <title>Genome of Ochrobactrum anthropi ATCC 49188 T, a versatile opportunistic pathogen and symbiont of several eukaryotic hosts.</title>
        <authorList>
            <person name="Chain P.S."/>
            <person name="Lang D.M."/>
            <person name="Comerci D.J."/>
            <person name="Malfatti S.A."/>
            <person name="Vergez L.M."/>
            <person name="Shin M."/>
            <person name="Ugalde R.A."/>
            <person name="Garcia E."/>
            <person name="Tolmasky M.E."/>
        </authorList>
    </citation>
    <scope>NUCLEOTIDE SEQUENCE [LARGE SCALE GENOMIC DNA]</scope>
    <source>
        <strain>ATCC 49188 / DSM 6882 / CCUG 24695 / JCM 21032 / LMG 3331 / NBRC 15819 / NCTC 12168 / Alc 37</strain>
    </source>
</reference>
<proteinExistence type="inferred from homology"/>
<protein>
    <recommendedName>
        <fullName evidence="1">UPF0314 protein Oant_0840</fullName>
    </recommendedName>
</protein>
<dbReference type="EMBL" id="CP000758">
    <property type="protein sequence ID" value="ABS13562.1"/>
    <property type="molecule type" value="Genomic_DNA"/>
</dbReference>
<dbReference type="RefSeq" id="WP_010657666.1">
    <property type="nucleotide sequence ID" value="NC_009667.1"/>
</dbReference>
<dbReference type="STRING" id="439375.Oant_0840"/>
<dbReference type="KEGG" id="oan:Oant_0840"/>
<dbReference type="eggNOG" id="ENOG502ZZUX">
    <property type="taxonomic scope" value="Bacteria"/>
</dbReference>
<dbReference type="HOGENOM" id="CLU_1395337_0_0_5"/>
<dbReference type="Proteomes" id="UP000002301">
    <property type="component" value="Chromosome 1"/>
</dbReference>
<dbReference type="GO" id="GO:0005886">
    <property type="term" value="C:plasma membrane"/>
    <property type="evidence" value="ECO:0007669"/>
    <property type="project" value="UniProtKB-SubCell"/>
</dbReference>
<dbReference type="HAMAP" id="MF_01514">
    <property type="entry name" value="UPF0314"/>
    <property type="match status" value="1"/>
</dbReference>
<dbReference type="InterPro" id="IPR019691">
    <property type="entry name" value="DUF2585"/>
</dbReference>
<dbReference type="NCBIfam" id="NF002099">
    <property type="entry name" value="PRK00944.1"/>
    <property type="match status" value="1"/>
</dbReference>
<dbReference type="Pfam" id="PF10755">
    <property type="entry name" value="DUF2585"/>
    <property type="match status" value="1"/>
</dbReference>